<organism>
    <name type="scientific">Chlorobium luteolum (strain DSM 273 / BCRC 81028 / 2530)</name>
    <name type="common">Pelodictyon luteolum</name>
    <dbReference type="NCBI Taxonomy" id="319225"/>
    <lineage>
        <taxon>Bacteria</taxon>
        <taxon>Pseudomonadati</taxon>
        <taxon>Chlorobiota</taxon>
        <taxon>Chlorobiia</taxon>
        <taxon>Chlorobiales</taxon>
        <taxon>Chlorobiaceae</taxon>
        <taxon>Chlorobium/Pelodictyon group</taxon>
        <taxon>Pelodictyon</taxon>
    </lineage>
</organism>
<name>RIMO_CHLL3</name>
<evidence type="ECO:0000255" key="1">
    <source>
        <dbReference type="HAMAP-Rule" id="MF_01865"/>
    </source>
</evidence>
<evidence type="ECO:0000255" key="2">
    <source>
        <dbReference type="PROSITE-ProRule" id="PRU01266"/>
    </source>
</evidence>
<dbReference type="EC" id="2.8.4.4" evidence="1"/>
<dbReference type="EMBL" id="CP000096">
    <property type="protein sequence ID" value="ABB24264.1"/>
    <property type="molecule type" value="Genomic_DNA"/>
</dbReference>
<dbReference type="RefSeq" id="WP_011358136.1">
    <property type="nucleotide sequence ID" value="NC_007512.1"/>
</dbReference>
<dbReference type="SMR" id="Q3B317"/>
<dbReference type="STRING" id="319225.Plut_1405"/>
<dbReference type="KEGG" id="plt:Plut_1405"/>
<dbReference type="eggNOG" id="COG0621">
    <property type="taxonomic scope" value="Bacteria"/>
</dbReference>
<dbReference type="HOGENOM" id="CLU_018697_0_1_10"/>
<dbReference type="OrthoDB" id="9805215at2"/>
<dbReference type="Proteomes" id="UP000002709">
    <property type="component" value="Chromosome"/>
</dbReference>
<dbReference type="GO" id="GO:0005829">
    <property type="term" value="C:cytosol"/>
    <property type="evidence" value="ECO:0007669"/>
    <property type="project" value="TreeGrafter"/>
</dbReference>
<dbReference type="GO" id="GO:0051539">
    <property type="term" value="F:4 iron, 4 sulfur cluster binding"/>
    <property type="evidence" value="ECO:0007669"/>
    <property type="project" value="UniProtKB-UniRule"/>
</dbReference>
<dbReference type="GO" id="GO:0035599">
    <property type="term" value="F:aspartic acid methylthiotransferase activity"/>
    <property type="evidence" value="ECO:0007669"/>
    <property type="project" value="TreeGrafter"/>
</dbReference>
<dbReference type="GO" id="GO:0046872">
    <property type="term" value="F:metal ion binding"/>
    <property type="evidence" value="ECO:0007669"/>
    <property type="project" value="UniProtKB-KW"/>
</dbReference>
<dbReference type="GO" id="GO:0103039">
    <property type="term" value="F:protein methylthiotransferase activity"/>
    <property type="evidence" value="ECO:0007669"/>
    <property type="project" value="UniProtKB-EC"/>
</dbReference>
<dbReference type="GO" id="GO:0006400">
    <property type="term" value="P:tRNA modification"/>
    <property type="evidence" value="ECO:0007669"/>
    <property type="project" value="InterPro"/>
</dbReference>
<dbReference type="CDD" id="cd01335">
    <property type="entry name" value="Radical_SAM"/>
    <property type="match status" value="1"/>
</dbReference>
<dbReference type="FunFam" id="3.80.30.20:FF:000001">
    <property type="entry name" value="tRNA-2-methylthio-N(6)-dimethylallyladenosine synthase 2"/>
    <property type="match status" value="1"/>
</dbReference>
<dbReference type="Gene3D" id="3.40.50.12160">
    <property type="entry name" value="Methylthiotransferase, N-terminal domain"/>
    <property type="match status" value="1"/>
</dbReference>
<dbReference type="Gene3D" id="2.40.50.140">
    <property type="entry name" value="Nucleic acid-binding proteins"/>
    <property type="match status" value="1"/>
</dbReference>
<dbReference type="Gene3D" id="3.80.30.20">
    <property type="entry name" value="tm_1862 like domain"/>
    <property type="match status" value="1"/>
</dbReference>
<dbReference type="HAMAP" id="MF_01865">
    <property type="entry name" value="MTTase_RimO"/>
    <property type="match status" value="1"/>
</dbReference>
<dbReference type="InterPro" id="IPR006638">
    <property type="entry name" value="Elp3/MiaA/NifB-like_rSAM"/>
</dbReference>
<dbReference type="InterPro" id="IPR005839">
    <property type="entry name" value="Methylthiotransferase"/>
</dbReference>
<dbReference type="InterPro" id="IPR020612">
    <property type="entry name" value="Methylthiotransferase_CS"/>
</dbReference>
<dbReference type="InterPro" id="IPR013848">
    <property type="entry name" value="Methylthiotransferase_N"/>
</dbReference>
<dbReference type="InterPro" id="IPR038135">
    <property type="entry name" value="Methylthiotransferase_N_sf"/>
</dbReference>
<dbReference type="InterPro" id="IPR012340">
    <property type="entry name" value="NA-bd_OB-fold"/>
</dbReference>
<dbReference type="InterPro" id="IPR005840">
    <property type="entry name" value="Ribosomal_uS12_MeSTrfase_RimO"/>
</dbReference>
<dbReference type="InterPro" id="IPR007197">
    <property type="entry name" value="rSAM"/>
</dbReference>
<dbReference type="InterPro" id="IPR023404">
    <property type="entry name" value="rSAM_horseshoe"/>
</dbReference>
<dbReference type="InterPro" id="IPR002792">
    <property type="entry name" value="TRAM_dom"/>
</dbReference>
<dbReference type="NCBIfam" id="TIGR01125">
    <property type="entry name" value="30S ribosomal protein S12 methylthiotransferase RimO"/>
    <property type="match status" value="1"/>
</dbReference>
<dbReference type="NCBIfam" id="TIGR00089">
    <property type="entry name" value="MiaB/RimO family radical SAM methylthiotransferase"/>
    <property type="match status" value="1"/>
</dbReference>
<dbReference type="PANTHER" id="PTHR43837">
    <property type="entry name" value="RIBOSOMAL PROTEIN S12 METHYLTHIOTRANSFERASE RIMO"/>
    <property type="match status" value="1"/>
</dbReference>
<dbReference type="PANTHER" id="PTHR43837:SF1">
    <property type="entry name" value="RIBOSOMAL PROTEIN US12 METHYLTHIOTRANSFERASE RIMO"/>
    <property type="match status" value="1"/>
</dbReference>
<dbReference type="Pfam" id="PF04055">
    <property type="entry name" value="Radical_SAM"/>
    <property type="match status" value="1"/>
</dbReference>
<dbReference type="Pfam" id="PF18693">
    <property type="entry name" value="TRAM_2"/>
    <property type="match status" value="1"/>
</dbReference>
<dbReference type="Pfam" id="PF00919">
    <property type="entry name" value="UPF0004"/>
    <property type="match status" value="1"/>
</dbReference>
<dbReference type="SFLD" id="SFLDG01082">
    <property type="entry name" value="B12-binding_domain_containing"/>
    <property type="match status" value="1"/>
</dbReference>
<dbReference type="SFLD" id="SFLDS00029">
    <property type="entry name" value="Radical_SAM"/>
    <property type="match status" value="1"/>
</dbReference>
<dbReference type="SFLD" id="SFLDF00274">
    <property type="entry name" value="ribosomal_protein_S12_methylth"/>
    <property type="match status" value="1"/>
</dbReference>
<dbReference type="SMART" id="SM00729">
    <property type="entry name" value="Elp3"/>
    <property type="match status" value="1"/>
</dbReference>
<dbReference type="SUPFAM" id="SSF102114">
    <property type="entry name" value="Radical SAM enzymes"/>
    <property type="match status" value="1"/>
</dbReference>
<dbReference type="PROSITE" id="PS51449">
    <property type="entry name" value="MTTASE_N"/>
    <property type="match status" value="1"/>
</dbReference>
<dbReference type="PROSITE" id="PS01278">
    <property type="entry name" value="MTTASE_RADICAL"/>
    <property type="match status" value="1"/>
</dbReference>
<dbReference type="PROSITE" id="PS51918">
    <property type="entry name" value="RADICAL_SAM"/>
    <property type="match status" value="1"/>
</dbReference>
<dbReference type="PROSITE" id="PS50926">
    <property type="entry name" value="TRAM"/>
    <property type="match status" value="1"/>
</dbReference>
<feature type="chain" id="PRO_0000374915" description="Ribosomal protein uS12 methylthiotransferase RimO">
    <location>
        <begin position="1"/>
        <end position="440"/>
    </location>
</feature>
<feature type="domain" description="MTTase N-terminal" evidence="1">
    <location>
        <begin position="8"/>
        <end position="124"/>
    </location>
</feature>
<feature type="domain" description="Radical SAM core" evidence="2">
    <location>
        <begin position="134"/>
        <end position="363"/>
    </location>
</feature>
<feature type="domain" description="TRAM" evidence="1">
    <location>
        <begin position="366"/>
        <end position="437"/>
    </location>
</feature>
<feature type="binding site" evidence="1">
    <location>
        <position position="17"/>
    </location>
    <ligand>
        <name>[4Fe-4S] cluster</name>
        <dbReference type="ChEBI" id="CHEBI:49883"/>
        <label>1</label>
    </ligand>
</feature>
<feature type="binding site" evidence="1">
    <location>
        <position position="53"/>
    </location>
    <ligand>
        <name>[4Fe-4S] cluster</name>
        <dbReference type="ChEBI" id="CHEBI:49883"/>
        <label>1</label>
    </ligand>
</feature>
<feature type="binding site" evidence="1">
    <location>
        <position position="87"/>
    </location>
    <ligand>
        <name>[4Fe-4S] cluster</name>
        <dbReference type="ChEBI" id="CHEBI:49883"/>
        <label>1</label>
    </ligand>
</feature>
<feature type="binding site" evidence="1">
    <location>
        <position position="148"/>
    </location>
    <ligand>
        <name>[4Fe-4S] cluster</name>
        <dbReference type="ChEBI" id="CHEBI:49883"/>
        <label>2</label>
        <note>4Fe-4S-S-AdoMet</note>
    </ligand>
</feature>
<feature type="binding site" evidence="1">
    <location>
        <position position="152"/>
    </location>
    <ligand>
        <name>[4Fe-4S] cluster</name>
        <dbReference type="ChEBI" id="CHEBI:49883"/>
        <label>2</label>
        <note>4Fe-4S-S-AdoMet</note>
    </ligand>
</feature>
<feature type="binding site" evidence="1">
    <location>
        <position position="155"/>
    </location>
    <ligand>
        <name>[4Fe-4S] cluster</name>
        <dbReference type="ChEBI" id="CHEBI:49883"/>
        <label>2</label>
        <note>4Fe-4S-S-AdoMet</note>
    </ligand>
</feature>
<proteinExistence type="inferred from homology"/>
<gene>
    <name evidence="1" type="primary">rimO</name>
    <name type="ordered locus">Plut_1405</name>
</gene>
<comment type="function">
    <text evidence="1">Catalyzes the methylthiolation of an aspartic acid residue of ribosomal protein uS12.</text>
</comment>
<comment type="catalytic activity">
    <reaction evidence="1">
        <text>L-aspartate(89)-[ribosomal protein uS12]-hydrogen + (sulfur carrier)-SH + AH2 + 2 S-adenosyl-L-methionine = 3-methylsulfanyl-L-aspartate(89)-[ribosomal protein uS12]-hydrogen + (sulfur carrier)-H + 5'-deoxyadenosine + L-methionine + A + S-adenosyl-L-homocysteine + 2 H(+)</text>
        <dbReference type="Rhea" id="RHEA:37087"/>
        <dbReference type="Rhea" id="RHEA-COMP:10460"/>
        <dbReference type="Rhea" id="RHEA-COMP:10461"/>
        <dbReference type="Rhea" id="RHEA-COMP:14737"/>
        <dbReference type="Rhea" id="RHEA-COMP:14739"/>
        <dbReference type="ChEBI" id="CHEBI:13193"/>
        <dbReference type="ChEBI" id="CHEBI:15378"/>
        <dbReference type="ChEBI" id="CHEBI:17319"/>
        <dbReference type="ChEBI" id="CHEBI:17499"/>
        <dbReference type="ChEBI" id="CHEBI:29917"/>
        <dbReference type="ChEBI" id="CHEBI:29961"/>
        <dbReference type="ChEBI" id="CHEBI:57844"/>
        <dbReference type="ChEBI" id="CHEBI:57856"/>
        <dbReference type="ChEBI" id="CHEBI:59789"/>
        <dbReference type="ChEBI" id="CHEBI:64428"/>
        <dbReference type="ChEBI" id="CHEBI:73599"/>
        <dbReference type="EC" id="2.8.4.4"/>
    </reaction>
</comment>
<comment type="cofactor">
    <cofactor evidence="1">
        <name>[4Fe-4S] cluster</name>
        <dbReference type="ChEBI" id="CHEBI:49883"/>
    </cofactor>
    <text evidence="1">Binds 2 [4Fe-4S] clusters. One cluster is coordinated with 3 cysteines and an exchangeable S-adenosyl-L-methionine.</text>
</comment>
<comment type="subcellular location">
    <subcellularLocation>
        <location evidence="1">Cytoplasm</location>
    </subcellularLocation>
</comment>
<comment type="similarity">
    <text evidence="1">Belongs to the methylthiotransferase family. RimO subfamily.</text>
</comment>
<keyword id="KW-0004">4Fe-4S</keyword>
<keyword id="KW-0963">Cytoplasm</keyword>
<keyword id="KW-0408">Iron</keyword>
<keyword id="KW-0411">Iron-sulfur</keyword>
<keyword id="KW-0479">Metal-binding</keyword>
<keyword id="KW-1185">Reference proteome</keyword>
<keyword id="KW-0949">S-adenosyl-L-methionine</keyword>
<keyword id="KW-0808">Transferase</keyword>
<reference key="1">
    <citation type="submission" date="2005-08" db="EMBL/GenBank/DDBJ databases">
        <title>Complete sequence of Pelodictyon luteolum DSM 273.</title>
        <authorList>
            <consortium name="US DOE Joint Genome Institute"/>
            <person name="Copeland A."/>
            <person name="Lucas S."/>
            <person name="Lapidus A."/>
            <person name="Barry K."/>
            <person name="Detter J.C."/>
            <person name="Glavina T."/>
            <person name="Hammon N."/>
            <person name="Israni S."/>
            <person name="Pitluck S."/>
            <person name="Bryant D."/>
            <person name="Schmutz J."/>
            <person name="Larimer F."/>
            <person name="Land M."/>
            <person name="Kyrpides N."/>
            <person name="Ivanova N."/>
            <person name="Richardson P."/>
        </authorList>
    </citation>
    <scope>NUCLEOTIDE SEQUENCE [LARGE SCALE GENOMIC DNA]</scope>
    <source>
        <strain>DSM 273 / BCRC 81028 / 2530</strain>
    </source>
</reference>
<sequence>MPHPEHNTSVFLLSLGCSKNTVDSERLQAQAEASGITFTQQAEEAEVILINTCGFIEDAKEESIMEILAAVDMKNAGTVRQVYVMGCLTELYRNELQEELPEVDRFFGTRELPAVLDALGARYHQELYDHRSLLTPPHSSYLKIAEGCSRACSFCSIPKIRGRYLSQPMEQLLREARLLQENGVKELNLIAQDITVYGVDLYGKQMLNDLLMRLSDMEFRWIRLLYAYPVGFPLEVIDTIGNRSNICNYLDLPLQHCSDPILRSMNRGITKEQSLRLIEEIRNRNPDIRLRTTMIAGYPGETRKEFEEMLEFAGSVRFDRLGCFPYRHEEHSPAYSLIDTVPEEEKQERVSELMELQEEIARKKNEAFVGSLMTVLVDRPEEGEEGLILIGRTEFDAPEVDNECLLESGSPEPSPGTFVQARITGSTAYELHGTVESLME</sequence>
<accession>Q3B317</accession>
<protein>
    <recommendedName>
        <fullName evidence="1">Ribosomal protein uS12 methylthiotransferase RimO</fullName>
        <shortName evidence="1">uS12 MTTase</shortName>
        <shortName evidence="1">uS12 methylthiotransferase</shortName>
        <ecNumber evidence="1">2.8.4.4</ecNumber>
    </recommendedName>
    <alternativeName>
        <fullName evidence="1">Ribosomal protein uS12 (aspartate-C(3))-methylthiotransferase</fullName>
    </alternativeName>
    <alternativeName>
        <fullName evidence="1">Ribosome maturation factor RimO</fullName>
    </alternativeName>
</protein>